<proteinExistence type="inferred from homology"/>
<comment type="function">
    <text evidence="1">Mediates glycerol diffusion across the cytoplasmic membrane via a pore-type mechanism.</text>
</comment>
<comment type="catalytic activity">
    <reaction evidence="1">
        <text>glycerol(in) = glycerol(out)</text>
        <dbReference type="Rhea" id="RHEA:29675"/>
        <dbReference type="ChEBI" id="CHEBI:17754"/>
    </reaction>
</comment>
<comment type="subunit">
    <text evidence="1">Homotetramer.</text>
</comment>
<comment type="subcellular location">
    <subcellularLocation>
        <location evidence="1">Cell inner membrane</location>
        <topology evidence="1">Multi-pass membrane protein</topology>
    </subcellularLocation>
</comment>
<comment type="domain">
    <text evidence="2">Aquaporins contain two tandem repeats each containing three membrane-spanning domains and a pore-forming loop with the signature motif Asn-Pro-Ala (NPA).</text>
</comment>
<comment type="similarity">
    <text evidence="2">Belongs to the MIP/aquaporin (TC 1.A.8) family.</text>
</comment>
<comment type="caution">
    <text evidence="2">All strains have an amber mutation in position 215.</text>
</comment>
<organism>
    <name type="scientific">Shigella flexneri</name>
    <dbReference type="NCBI Taxonomy" id="623"/>
    <lineage>
        <taxon>Bacteria</taxon>
        <taxon>Pseudomonadati</taxon>
        <taxon>Pseudomonadota</taxon>
        <taxon>Gammaproteobacteria</taxon>
        <taxon>Enterobacterales</taxon>
        <taxon>Enterobacteriaceae</taxon>
        <taxon>Shigella</taxon>
    </lineage>
</organism>
<dbReference type="EMBL" id="Z11768">
    <property type="protein sequence ID" value="CAA77815.2"/>
    <property type="molecule type" value="Genomic_DNA"/>
</dbReference>
<dbReference type="EMBL" id="AE005674">
    <property type="protein sequence ID" value="AAN45438.1"/>
    <property type="status" value="ALT_SEQ"/>
    <property type="molecule type" value="Genomic_DNA"/>
</dbReference>
<dbReference type="EMBL" id="AE014073">
    <property type="protein sequence ID" value="AAP18762.1"/>
    <property type="status" value="ALT_SEQ"/>
    <property type="molecule type" value="Genomic_DNA"/>
</dbReference>
<dbReference type="RefSeq" id="WP_000084271.1">
    <property type="nucleotide sequence ID" value="NZ_PUHI01000386.1"/>
</dbReference>
<dbReference type="SMR" id="P31140"/>
<dbReference type="STRING" id="198214.SF4005"/>
<dbReference type="PaxDb" id="198214-SF4005"/>
<dbReference type="KEGG" id="sfx:S3742"/>
<dbReference type="PATRIC" id="fig|623.158.peg.4367"/>
<dbReference type="HOGENOM" id="CLU_020019_9_3_6"/>
<dbReference type="Proteomes" id="UP000001006">
    <property type="component" value="Chromosome"/>
</dbReference>
<dbReference type="Proteomes" id="UP000002673">
    <property type="component" value="Chromosome"/>
</dbReference>
<dbReference type="GO" id="GO:0005886">
    <property type="term" value="C:plasma membrane"/>
    <property type="evidence" value="ECO:0007669"/>
    <property type="project" value="UniProtKB-SubCell"/>
</dbReference>
<dbReference type="GO" id="GO:0015254">
    <property type="term" value="F:glycerol channel activity"/>
    <property type="evidence" value="ECO:0007669"/>
    <property type="project" value="TreeGrafter"/>
</dbReference>
<dbReference type="CDD" id="cd00333">
    <property type="entry name" value="MIP"/>
    <property type="match status" value="1"/>
</dbReference>
<dbReference type="FunFam" id="1.20.1080.10:FF:000004">
    <property type="entry name" value="Glycerol facilitator"/>
    <property type="match status" value="1"/>
</dbReference>
<dbReference type="Gene3D" id="1.20.1080.10">
    <property type="entry name" value="Glycerol uptake facilitator protein"/>
    <property type="match status" value="1"/>
</dbReference>
<dbReference type="InterPro" id="IPR023271">
    <property type="entry name" value="Aquaporin-like"/>
</dbReference>
<dbReference type="InterPro" id="IPR000425">
    <property type="entry name" value="MIP"/>
</dbReference>
<dbReference type="InterPro" id="IPR050363">
    <property type="entry name" value="MIP/Aquaporin"/>
</dbReference>
<dbReference type="InterPro" id="IPR022357">
    <property type="entry name" value="MIP_CS"/>
</dbReference>
<dbReference type="NCBIfam" id="TIGR00861">
    <property type="entry name" value="MIP"/>
    <property type="match status" value="1"/>
</dbReference>
<dbReference type="PANTHER" id="PTHR43829">
    <property type="entry name" value="AQUAPORIN OR AQUAGLYCEROPORIN RELATED"/>
    <property type="match status" value="1"/>
</dbReference>
<dbReference type="PANTHER" id="PTHR43829:SF9">
    <property type="entry name" value="AQUAPORIN-9"/>
    <property type="match status" value="1"/>
</dbReference>
<dbReference type="Pfam" id="PF00230">
    <property type="entry name" value="MIP"/>
    <property type="match status" value="1"/>
</dbReference>
<dbReference type="PRINTS" id="PR00783">
    <property type="entry name" value="MINTRINSICP"/>
</dbReference>
<dbReference type="SUPFAM" id="SSF81338">
    <property type="entry name" value="Aquaporin-like"/>
    <property type="match status" value="1"/>
</dbReference>
<dbReference type="PROSITE" id="PS00221">
    <property type="entry name" value="MIP"/>
    <property type="match status" value="1"/>
</dbReference>
<sequence>MSQTSTLKGQCIAEFLGTGLLIFFGVGCVAALKVAGASFGQWEISVIWGLGVAMAIYLTAGVSGAHLNPAVTIALWLFACFDKRKVIPFIVSQVAGAFCAAALVYGLYYNLFFDFEQTHHIVRGSVESVDLAGTFSTYPNPHINFVQAFAVEMVITAILMGLILALTDDGNGVPRGPLAPLLIGLLIAVIGASMGPLTGFAMNPARDFGPKVFAWLAGWGNVAFTGGRDIPYFLVPLFSPIVGAIVGAFAYRKLIGRHLPCDICVVEEKETTTPSEQKASL</sequence>
<evidence type="ECO:0000250" key="1">
    <source>
        <dbReference type="UniProtKB" id="P0AER0"/>
    </source>
</evidence>
<evidence type="ECO:0000305" key="2"/>
<gene>
    <name type="primary">glpF</name>
    <name type="ordered locus">SF4005</name>
    <name type="ordered locus">S3742</name>
</gene>
<name>GLPF_SHIFL</name>
<protein>
    <recommendedName>
        <fullName evidence="1">Glycerol uptake facilitator protein</fullName>
    </recommendedName>
    <alternativeName>
        <fullName>Aquaglyceroporin</fullName>
    </alternativeName>
</protein>
<reference key="1">
    <citation type="journal article" date="1992" name="J. Bacteriol.">
        <title>Molecular analysis of the glpFKX regions of Escherichia coli and Shigella flexneri.</title>
        <authorList>
            <person name="Truniger V."/>
            <person name="Boos W."/>
            <person name="Sweet G."/>
        </authorList>
    </citation>
    <scope>NUCLEOTIDE SEQUENCE [GENOMIC DNA]</scope>
    <source>
        <strain>M4243</strain>
    </source>
</reference>
<reference key="2">
    <citation type="journal article" date="2002" name="Nucleic Acids Res.">
        <title>Genome sequence of Shigella flexneri 2a: insights into pathogenicity through comparison with genomes of Escherichia coli K12 and O157.</title>
        <authorList>
            <person name="Jin Q."/>
            <person name="Yuan Z."/>
            <person name="Xu J."/>
            <person name="Wang Y."/>
            <person name="Shen Y."/>
            <person name="Lu W."/>
            <person name="Wang J."/>
            <person name="Liu H."/>
            <person name="Yang J."/>
            <person name="Yang F."/>
            <person name="Zhang X."/>
            <person name="Zhang J."/>
            <person name="Yang G."/>
            <person name="Wu H."/>
            <person name="Qu D."/>
            <person name="Dong J."/>
            <person name="Sun L."/>
            <person name="Xue Y."/>
            <person name="Zhao A."/>
            <person name="Gao Y."/>
            <person name="Zhu J."/>
            <person name="Kan B."/>
            <person name="Ding K."/>
            <person name="Chen S."/>
            <person name="Cheng H."/>
            <person name="Yao Z."/>
            <person name="He B."/>
            <person name="Chen R."/>
            <person name="Ma D."/>
            <person name="Qiang B."/>
            <person name="Wen Y."/>
            <person name="Hou Y."/>
            <person name="Yu J."/>
        </authorList>
    </citation>
    <scope>NUCLEOTIDE SEQUENCE [LARGE SCALE GENOMIC DNA]</scope>
    <source>
        <strain>301 / Serotype 2a</strain>
    </source>
</reference>
<reference key="3">
    <citation type="journal article" date="2003" name="Infect. Immun.">
        <title>Complete genome sequence and comparative genomics of Shigella flexneri serotype 2a strain 2457T.</title>
        <authorList>
            <person name="Wei J."/>
            <person name="Goldberg M.B."/>
            <person name="Burland V."/>
            <person name="Venkatesan M.M."/>
            <person name="Deng W."/>
            <person name="Fournier G."/>
            <person name="Mayhew G.F."/>
            <person name="Plunkett G. III"/>
            <person name="Rose D.J."/>
            <person name="Darling A."/>
            <person name="Mau B."/>
            <person name="Perna N.T."/>
            <person name="Payne S.M."/>
            <person name="Runyen-Janecky L.J."/>
            <person name="Zhou S."/>
            <person name="Schwartz D.C."/>
            <person name="Blattner F.R."/>
        </authorList>
    </citation>
    <scope>NUCLEOTIDE SEQUENCE [LARGE SCALE GENOMIC DNA]</scope>
    <source>
        <strain>ATCC 700930 / 2457T / Serotype 2a</strain>
    </source>
</reference>
<feature type="chain" id="PRO_0000064085" description="Glycerol uptake facilitator protein">
    <location>
        <begin position="1"/>
        <end position="281"/>
    </location>
</feature>
<feature type="topological domain" description="Cytoplasmic" evidence="1">
    <location>
        <begin position="1"/>
        <end position="5"/>
    </location>
</feature>
<feature type="transmembrane region" description="Helical; Name=M1" evidence="1">
    <location>
        <begin position="6"/>
        <end position="34"/>
    </location>
</feature>
<feature type="topological domain" description="Periplasmic" evidence="1">
    <location>
        <begin position="35"/>
        <end position="39"/>
    </location>
</feature>
<feature type="transmembrane region" description="Helical; Name=M2" evidence="1">
    <location>
        <begin position="40"/>
        <end position="60"/>
    </location>
</feature>
<feature type="topological domain" description="Cytoplasmic" evidence="1">
    <location>
        <begin position="61"/>
        <end position="63"/>
    </location>
</feature>
<feature type="intramembrane region" evidence="1">
    <location>
        <begin position="64"/>
        <end position="67"/>
    </location>
</feature>
<feature type="intramembrane region" description="Helical; Name=M3" evidence="1">
    <location>
        <begin position="68"/>
        <end position="78"/>
    </location>
</feature>
<feature type="topological domain" description="Cytoplasmic" evidence="1">
    <location>
        <begin position="79"/>
        <end position="84"/>
    </location>
</feature>
<feature type="transmembrane region" description="Helical; Name=M4" evidence="1">
    <location>
        <begin position="85"/>
        <end position="108"/>
    </location>
</feature>
<feature type="topological domain" description="Periplasmic" evidence="1">
    <location>
        <begin position="109"/>
        <end position="143"/>
    </location>
</feature>
<feature type="transmembrane region" description="Helical; Name=M5" evidence="1">
    <location>
        <begin position="144"/>
        <end position="169"/>
    </location>
</feature>
<feature type="topological domain" description="Cytoplasmic" evidence="1">
    <location>
        <begin position="170"/>
        <end position="177"/>
    </location>
</feature>
<feature type="transmembrane region" description="Helical; Name=M6" evidence="1">
    <location>
        <begin position="178"/>
        <end position="194"/>
    </location>
</feature>
<feature type="topological domain" description="Periplasmic" evidence="1">
    <location>
        <begin position="195"/>
        <end position="198"/>
    </location>
</feature>
<feature type="intramembrane region" evidence="1">
    <location>
        <begin position="199"/>
        <end position="202"/>
    </location>
</feature>
<feature type="intramembrane region" description="Helical; Name=M7" evidence="1">
    <location>
        <begin position="203"/>
        <end position="216"/>
    </location>
</feature>
<feature type="topological domain" description="Periplasmic" evidence="1">
    <location>
        <begin position="217"/>
        <end position="231"/>
    </location>
</feature>
<feature type="transmembrane region" description="Helical; Name=M8" evidence="1">
    <location>
        <begin position="232"/>
        <end position="254"/>
    </location>
</feature>
<feature type="topological domain" description="Cytoplasmic" evidence="1">
    <location>
        <begin position="255"/>
        <end position="281"/>
    </location>
</feature>
<feature type="short sequence motif" description="NPA 1" evidence="2">
    <location>
        <begin position="68"/>
        <end position="70"/>
    </location>
</feature>
<feature type="short sequence motif" description="NPA 2" evidence="2">
    <location>
        <begin position="203"/>
        <end position="205"/>
    </location>
</feature>
<feature type="site" description="Substrate discrimination" evidence="1">
    <location>
        <position position="48"/>
    </location>
</feature>
<feature type="site" description="Substrate discrimination" evidence="1">
    <location>
        <position position="200"/>
    </location>
</feature>
<feature type="site" description="Substrate discrimination" evidence="1">
    <location>
        <position position="206"/>
    </location>
</feature>
<keyword id="KW-0997">Cell inner membrane</keyword>
<keyword id="KW-1003">Cell membrane</keyword>
<keyword id="KW-0472">Membrane</keyword>
<keyword id="KW-1185">Reference proteome</keyword>
<keyword id="KW-0677">Repeat</keyword>
<keyword id="KW-0812">Transmembrane</keyword>
<keyword id="KW-1133">Transmembrane helix</keyword>
<keyword id="KW-0813">Transport</keyword>
<accession>P31140</accession>